<feature type="chain" id="PRO_0000107997" description="Sucrose operon repressor">
    <location>
        <begin position="1"/>
        <end position="331"/>
    </location>
</feature>
<feature type="domain" description="HTH lacI-type" evidence="2">
    <location>
        <begin position="1"/>
        <end position="56"/>
    </location>
</feature>
<feature type="DNA-binding region" description="H-T-H motif" evidence="2">
    <location>
        <begin position="4"/>
        <end position="23"/>
    </location>
</feature>
<keyword id="KW-0238">DNA-binding</keyword>
<keyword id="KW-1185">Reference proteome</keyword>
<keyword id="KW-0678">Repressor</keyword>
<keyword id="KW-0804">Transcription</keyword>
<keyword id="KW-0805">Transcription regulation</keyword>
<organism>
    <name type="scientific">Shigella flexneri</name>
    <dbReference type="NCBI Taxonomy" id="623"/>
    <lineage>
        <taxon>Bacteria</taxon>
        <taxon>Pseudomonadati</taxon>
        <taxon>Pseudomonadota</taxon>
        <taxon>Gammaproteobacteria</taxon>
        <taxon>Enterobacterales</taxon>
        <taxon>Enterobacteriaceae</taxon>
        <taxon>Shigella</taxon>
    </lineage>
</organism>
<gene>
    <name type="primary">cscR</name>
    <name type="ordered locus">SF2431</name>
    <name type="ordered locus">S2568</name>
</gene>
<proteinExistence type="inferred from homology"/>
<name>CSCR_SHIFL</name>
<sequence length="331" mass="36471">MASLKDVARLAGVSMMTVSRVMHNAESVRPATRDRVLQAIQTLNYVPDLSARKMRAQGRKPSTLAVLAQDTATTPFSVDILLAIEQTASEFGWNSFLINIFSEDDAARAARQLLAHRPDGIIYTTMGLRHITLPESLYGENIVLANCVADDPALPSYIPDDYTAQYESTQHLLAAGYRQPLCFWLPESALATGYRRQGFEQAWRDAGRDLAEVKQFHMATGDDHYTDLASLLNAHFKSGKPDFDVLICGNDRAAFVAYQVLLAKGVRIPQDVAVMGFDNLVGVGHLFLPPLTTIQLPHDIIGREAALHIIEGREGGRVTRIPCPLLIRCST</sequence>
<reference key="1">
    <citation type="journal article" date="2002" name="Nucleic Acids Res.">
        <title>Genome sequence of Shigella flexneri 2a: insights into pathogenicity through comparison with genomes of Escherichia coli K12 and O157.</title>
        <authorList>
            <person name="Jin Q."/>
            <person name="Yuan Z."/>
            <person name="Xu J."/>
            <person name="Wang Y."/>
            <person name="Shen Y."/>
            <person name="Lu W."/>
            <person name="Wang J."/>
            <person name="Liu H."/>
            <person name="Yang J."/>
            <person name="Yang F."/>
            <person name="Zhang X."/>
            <person name="Zhang J."/>
            <person name="Yang G."/>
            <person name="Wu H."/>
            <person name="Qu D."/>
            <person name="Dong J."/>
            <person name="Sun L."/>
            <person name="Xue Y."/>
            <person name="Zhao A."/>
            <person name="Gao Y."/>
            <person name="Zhu J."/>
            <person name="Kan B."/>
            <person name="Ding K."/>
            <person name="Chen S."/>
            <person name="Cheng H."/>
            <person name="Yao Z."/>
            <person name="He B."/>
            <person name="Chen R."/>
            <person name="Ma D."/>
            <person name="Qiang B."/>
            <person name="Wen Y."/>
            <person name="Hou Y."/>
            <person name="Yu J."/>
        </authorList>
    </citation>
    <scope>NUCLEOTIDE SEQUENCE [LARGE SCALE GENOMIC DNA]</scope>
    <source>
        <strain>301 / Serotype 2a</strain>
    </source>
</reference>
<reference key="2">
    <citation type="journal article" date="2003" name="Infect. Immun.">
        <title>Complete genome sequence and comparative genomics of Shigella flexneri serotype 2a strain 2457T.</title>
        <authorList>
            <person name="Wei J."/>
            <person name="Goldberg M.B."/>
            <person name="Burland V."/>
            <person name="Venkatesan M.M."/>
            <person name="Deng W."/>
            <person name="Fournier G."/>
            <person name="Mayhew G.F."/>
            <person name="Plunkett G. III"/>
            <person name="Rose D.J."/>
            <person name="Darling A."/>
            <person name="Mau B."/>
            <person name="Perna N.T."/>
            <person name="Payne S.M."/>
            <person name="Runyen-Janecky L.J."/>
            <person name="Zhou S."/>
            <person name="Schwartz D.C."/>
            <person name="Blattner F.R."/>
        </authorList>
    </citation>
    <scope>NUCLEOTIDE SEQUENCE [LARGE SCALE GENOMIC DNA]</scope>
    <source>
        <strain>ATCC 700930 / 2457T / Serotype 2a</strain>
    </source>
</reference>
<evidence type="ECO:0000250" key="1"/>
<evidence type="ECO:0000255" key="2">
    <source>
        <dbReference type="PROSITE-ProRule" id="PRU00111"/>
    </source>
</evidence>
<evidence type="ECO:0000305" key="3"/>
<comment type="function">
    <text evidence="1">Repressor for the csc operon. Binds D-fructose as an inducer (By similarity).</text>
</comment>
<comment type="sequence caution" evidence="3">
    <conflict type="erroneous initiation">
        <sequence resource="EMBL-CDS" id="AAN43942"/>
    </conflict>
    <text>Extended N-terminus.</text>
</comment>
<comment type="sequence caution" evidence="3">
    <conflict type="erroneous initiation">
        <sequence resource="EMBL-CDS" id="AAP17753"/>
    </conflict>
    <text>Extended N-terminus.</text>
</comment>
<protein>
    <recommendedName>
        <fullName>Sucrose operon repressor</fullName>
    </recommendedName>
    <alternativeName>
        <fullName>Csc operon regulatory protein</fullName>
    </alternativeName>
</protein>
<accession>P62572</accession>
<accession>P40715</accession>
<dbReference type="EMBL" id="AE005674">
    <property type="protein sequence ID" value="AAN43942.2"/>
    <property type="status" value="ALT_INIT"/>
    <property type="molecule type" value="Genomic_DNA"/>
</dbReference>
<dbReference type="EMBL" id="AE014073">
    <property type="protein sequence ID" value="AAP17753.1"/>
    <property type="status" value="ALT_INIT"/>
    <property type="molecule type" value="Genomic_DNA"/>
</dbReference>
<dbReference type="RefSeq" id="NP_708235.2">
    <property type="nucleotide sequence ID" value="NC_004337.2"/>
</dbReference>
<dbReference type="RefSeq" id="WP_001344440.1">
    <property type="nucleotide sequence ID" value="NZ_WPGW01000144.1"/>
</dbReference>
<dbReference type="SMR" id="P62572"/>
<dbReference type="STRING" id="198214.SF2431"/>
<dbReference type="PaxDb" id="198214-SF2431"/>
<dbReference type="GeneID" id="1027331"/>
<dbReference type="KEGG" id="sfl:SF2431"/>
<dbReference type="KEGG" id="sfx:S2568"/>
<dbReference type="PATRIC" id="fig|198214.7.peg.2905"/>
<dbReference type="HOGENOM" id="CLU_037628_6_1_6"/>
<dbReference type="Proteomes" id="UP000001006">
    <property type="component" value="Chromosome"/>
</dbReference>
<dbReference type="Proteomes" id="UP000002673">
    <property type="component" value="Chromosome"/>
</dbReference>
<dbReference type="GO" id="GO:0003700">
    <property type="term" value="F:DNA-binding transcription factor activity"/>
    <property type="evidence" value="ECO:0007669"/>
    <property type="project" value="TreeGrafter"/>
</dbReference>
<dbReference type="GO" id="GO:0000976">
    <property type="term" value="F:transcription cis-regulatory region binding"/>
    <property type="evidence" value="ECO:0007669"/>
    <property type="project" value="TreeGrafter"/>
</dbReference>
<dbReference type="CDD" id="cd01392">
    <property type="entry name" value="HTH_LacI"/>
    <property type="match status" value="1"/>
</dbReference>
<dbReference type="CDD" id="cd06288">
    <property type="entry name" value="PBP1_sucrose_transcription_regulator"/>
    <property type="match status" value="1"/>
</dbReference>
<dbReference type="Gene3D" id="3.40.50.2300">
    <property type="match status" value="2"/>
</dbReference>
<dbReference type="Gene3D" id="1.10.260.40">
    <property type="entry name" value="lambda repressor-like DNA-binding domains"/>
    <property type="match status" value="1"/>
</dbReference>
<dbReference type="InterPro" id="IPR000843">
    <property type="entry name" value="HTH_LacI"/>
</dbReference>
<dbReference type="InterPro" id="IPR010982">
    <property type="entry name" value="Lambda_DNA-bd_dom_sf"/>
</dbReference>
<dbReference type="InterPro" id="IPR001761">
    <property type="entry name" value="Peripla_BP/Lac1_sug-bd_dom"/>
</dbReference>
<dbReference type="InterPro" id="IPR028082">
    <property type="entry name" value="Peripla_BP_I"/>
</dbReference>
<dbReference type="PANTHER" id="PTHR30146:SF151">
    <property type="entry name" value="HTH-TYPE TRANSCRIPTIONAL REPRESSOR CYTR"/>
    <property type="match status" value="1"/>
</dbReference>
<dbReference type="PANTHER" id="PTHR30146">
    <property type="entry name" value="LACI-RELATED TRANSCRIPTIONAL REPRESSOR"/>
    <property type="match status" value="1"/>
</dbReference>
<dbReference type="Pfam" id="PF00356">
    <property type="entry name" value="LacI"/>
    <property type="match status" value="1"/>
</dbReference>
<dbReference type="Pfam" id="PF00532">
    <property type="entry name" value="Peripla_BP_1"/>
    <property type="match status" value="1"/>
</dbReference>
<dbReference type="PRINTS" id="PR00036">
    <property type="entry name" value="HTHLACI"/>
</dbReference>
<dbReference type="SMART" id="SM00354">
    <property type="entry name" value="HTH_LACI"/>
    <property type="match status" value="1"/>
</dbReference>
<dbReference type="SUPFAM" id="SSF47413">
    <property type="entry name" value="lambda repressor-like DNA-binding domains"/>
    <property type="match status" value="1"/>
</dbReference>
<dbReference type="SUPFAM" id="SSF53822">
    <property type="entry name" value="Periplasmic binding protein-like I"/>
    <property type="match status" value="1"/>
</dbReference>
<dbReference type="PROSITE" id="PS00356">
    <property type="entry name" value="HTH_LACI_1"/>
    <property type="match status" value="1"/>
</dbReference>
<dbReference type="PROSITE" id="PS50932">
    <property type="entry name" value="HTH_LACI_2"/>
    <property type="match status" value="1"/>
</dbReference>